<evidence type="ECO:0000255" key="1">
    <source>
        <dbReference type="PROSITE-ProRule" id="PRU00448"/>
    </source>
</evidence>
<evidence type="ECO:0000305" key="2"/>
<sequence length="160" mass="18132">PTDAQTDARSFLSEEMIAEFKAAFDMFDTDGGGDISTKELGTVMRMLGQNPTREELDAIIEEVDEDGSGTIDFEEFLVMMVRQLKEDQAGKSEEELAEFFRVFDKNGDGFIDREEFGEILRSSGEPVSEEEIDELMADGDKNNDGKIDFDEWLKMMENIQ</sequence>
<comment type="function">
    <text>Troponin is the central regulatory protein of striated muscle contraction. Tn consists of three components: Tn-I which is the inhibitor of actomyosin ATPase, Tn-T which contains the binding EF-hand for tropomyosin and Tn-C. The binding of calcium to Tn-C abolishes the inhibitory action of Tn on actin filaments.</text>
</comment>
<comment type="miscellaneous">
    <text>Skeletal muscle troponin C binds four calcium ions.</text>
</comment>
<comment type="similarity">
    <text evidence="2">Belongs to the troponin C family.</text>
</comment>
<reference key="1">
    <citation type="journal article" date="1993" name="J. Muscle Res. Cell Motil.">
        <title>Determination of the Ca2+ and Mg2+ affinity constants of troponin C from eel skeletal muscle and positioning of the single tryptophan in the primary structure.</title>
        <authorList>
            <person name="Francois J.-M."/>
            <person name="Gerday C."/>
            <person name="Prendergast F.G."/>
            <person name="Potter J.D."/>
        </authorList>
    </citation>
    <scope>PROTEIN SEQUENCE</scope>
    <source>
        <tissue>Fast-twitch skeletal muscle</tissue>
    </source>
</reference>
<organism>
    <name type="scientific">Anguilla anguilla</name>
    <name type="common">European freshwater eel</name>
    <name type="synonym">Muraena anguilla</name>
    <dbReference type="NCBI Taxonomy" id="7936"/>
    <lineage>
        <taxon>Eukaryota</taxon>
        <taxon>Metazoa</taxon>
        <taxon>Chordata</taxon>
        <taxon>Craniata</taxon>
        <taxon>Vertebrata</taxon>
        <taxon>Euteleostomi</taxon>
        <taxon>Actinopterygii</taxon>
        <taxon>Neopterygii</taxon>
        <taxon>Teleostei</taxon>
        <taxon>Anguilliformes</taxon>
        <taxon>Anguillidae</taxon>
        <taxon>Anguilla</taxon>
    </lineage>
</organism>
<proteinExistence type="evidence at protein level"/>
<keyword id="KW-0106">Calcium</keyword>
<keyword id="KW-0903">Direct protein sequencing</keyword>
<keyword id="KW-0479">Metal-binding</keyword>
<keyword id="KW-0514">Muscle protein</keyword>
<keyword id="KW-0677">Repeat</keyword>
<accession>P81660</accession>
<dbReference type="SMR" id="P81660"/>
<dbReference type="GO" id="GO:0016460">
    <property type="term" value="C:myosin II complex"/>
    <property type="evidence" value="ECO:0007669"/>
    <property type="project" value="TreeGrafter"/>
</dbReference>
<dbReference type="GO" id="GO:0005509">
    <property type="term" value="F:calcium ion binding"/>
    <property type="evidence" value="ECO:0007669"/>
    <property type="project" value="InterPro"/>
</dbReference>
<dbReference type="CDD" id="cd00051">
    <property type="entry name" value="EFh"/>
    <property type="match status" value="2"/>
</dbReference>
<dbReference type="FunFam" id="1.10.238.10:FF:000107">
    <property type="entry name" value="Troponin C, skeletal muscle"/>
    <property type="match status" value="1"/>
</dbReference>
<dbReference type="Gene3D" id="1.10.238.10">
    <property type="entry name" value="EF-hand"/>
    <property type="match status" value="2"/>
</dbReference>
<dbReference type="InterPro" id="IPR050230">
    <property type="entry name" value="CALM/Myosin/TropC-like"/>
</dbReference>
<dbReference type="InterPro" id="IPR011992">
    <property type="entry name" value="EF-hand-dom_pair"/>
</dbReference>
<dbReference type="InterPro" id="IPR018247">
    <property type="entry name" value="EF_Hand_1_Ca_BS"/>
</dbReference>
<dbReference type="InterPro" id="IPR002048">
    <property type="entry name" value="EF_hand_dom"/>
</dbReference>
<dbReference type="PANTHER" id="PTHR23048">
    <property type="entry name" value="MYOSIN LIGHT CHAIN 1, 3"/>
    <property type="match status" value="1"/>
</dbReference>
<dbReference type="PANTHER" id="PTHR23048:SF57">
    <property type="entry name" value="TROPONIN C2, FAST SKELETAL TYPE"/>
    <property type="match status" value="1"/>
</dbReference>
<dbReference type="Pfam" id="PF13499">
    <property type="entry name" value="EF-hand_7"/>
    <property type="match status" value="2"/>
</dbReference>
<dbReference type="SMART" id="SM00054">
    <property type="entry name" value="EFh"/>
    <property type="match status" value="4"/>
</dbReference>
<dbReference type="SUPFAM" id="SSF47473">
    <property type="entry name" value="EF-hand"/>
    <property type="match status" value="1"/>
</dbReference>
<dbReference type="PROSITE" id="PS00018">
    <property type="entry name" value="EF_HAND_1"/>
    <property type="match status" value="4"/>
</dbReference>
<dbReference type="PROSITE" id="PS50222">
    <property type="entry name" value="EF_HAND_2"/>
    <property type="match status" value="4"/>
</dbReference>
<feature type="chain" id="PRO_0000073709" description="Troponin C, skeletal muscle">
    <location>
        <begin position="1"/>
        <end position="160"/>
    </location>
</feature>
<feature type="domain" description="EF-hand 1" evidence="1">
    <location>
        <begin position="15"/>
        <end position="50"/>
    </location>
</feature>
<feature type="domain" description="EF-hand 2" evidence="1">
    <location>
        <begin position="51"/>
        <end position="86"/>
    </location>
</feature>
<feature type="domain" description="EF-hand 3" evidence="1">
    <location>
        <begin position="91"/>
        <end position="126"/>
    </location>
</feature>
<feature type="domain" description="EF-hand 4" evidence="1">
    <location>
        <begin position="127"/>
        <end position="160"/>
    </location>
</feature>
<feature type="binding site" evidence="1">
    <location>
        <position position="28"/>
    </location>
    <ligand>
        <name>Ca(2+)</name>
        <dbReference type="ChEBI" id="CHEBI:29108"/>
        <label>1</label>
    </ligand>
</feature>
<feature type="binding site" evidence="1">
    <location>
        <position position="30"/>
    </location>
    <ligand>
        <name>Ca(2+)</name>
        <dbReference type="ChEBI" id="CHEBI:29108"/>
        <label>1</label>
    </ligand>
</feature>
<feature type="binding site" evidence="1">
    <location>
        <position position="34"/>
    </location>
    <ligand>
        <name>Ca(2+)</name>
        <dbReference type="ChEBI" id="CHEBI:29108"/>
        <label>1</label>
    </ligand>
</feature>
<feature type="binding site" evidence="1">
    <location>
        <position position="39"/>
    </location>
    <ligand>
        <name>Ca(2+)</name>
        <dbReference type="ChEBI" id="CHEBI:29108"/>
        <label>1</label>
    </ligand>
</feature>
<feature type="binding site" evidence="1">
    <location>
        <position position="64"/>
    </location>
    <ligand>
        <name>Ca(2+)</name>
        <dbReference type="ChEBI" id="CHEBI:29108"/>
        <label>2</label>
    </ligand>
</feature>
<feature type="binding site" evidence="1">
    <location>
        <position position="66"/>
    </location>
    <ligand>
        <name>Ca(2+)</name>
        <dbReference type="ChEBI" id="CHEBI:29108"/>
        <label>2</label>
    </ligand>
</feature>
<feature type="binding site" evidence="1">
    <location>
        <position position="68"/>
    </location>
    <ligand>
        <name>Ca(2+)</name>
        <dbReference type="ChEBI" id="CHEBI:29108"/>
        <label>2</label>
    </ligand>
</feature>
<feature type="binding site" evidence="1">
    <location>
        <position position="70"/>
    </location>
    <ligand>
        <name>Ca(2+)</name>
        <dbReference type="ChEBI" id="CHEBI:29108"/>
        <label>2</label>
    </ligand>
</feature>
<feature type="binding site" evidence="1">
    <location>
        <position position="75"/>
    </location>
    <ligand>
        <name>Ca(2+)</name>
        <dbReference type="ChEBI" id="CHEBI:29108"/>
        <label>2</label>
    </ligand>
</feature>
<feature type="binding site" evidence="1">
    <location>
        <position position="104"/>
    </location>
    <ligand>
        <name>Ca(2+)</name>
        <dbReference type="ChEBI" id="CHEBI:29108"/>
        <label>3</label>
    </ligand>
</feature>
<feature type="binding site" evidence="1">
    <location>
        <position position="106"/>
    </location>
    <ligand>
        <name>Ca(2+)</name>
        <dbReference type="ChEBI" id="CHEBI:29108"/>
        <label>3</label>
    </ligand>
</feature>
<feature type="binding site" evidence="1">
    <location>
        <position position="108"/>
    </location>
    <ligand>
        <name>Ca(2+)</name>
        <dbReference type="ChEBI" id="CHEBI:29108"/>
        <label>3</label>
    </ligand>
</feature>
<feature type="binding site" evidence="1">
    <location>
        <position position="115"/>
    </location>
    <ligand>
        <name>Ca(2+)</name>
        <dbReference type="ChEBI" id="CHEBI:29108"/>
        <label>3</label>
    </ligand>
</feature>
<feature type="binding site" evidence="1">
    <location>
        <position position="140"/>
    </location>
    <ligand>
        <name>Ca(2+)</name>
        <dbReference type="ChEBI" id="CHEBI:29108"/>
        <label>4</label>
    </ligand>
</feature>
<feature type="binding site" evidence="1">
    <location>
        <position position="142"/>
    </location>
    <ligand>
        <name>Ca(2+)</name>
        <dbReference type="ChEBI" id="CHEBI:29108"/>
        <label>4</label>
    </ligand>
</feature>
<feature type="binding site" evidence="1">
    <location>
        <position position="144"/>
    </location>
    <ligand>
        <name>Ca(2+)</name>
        <dbReference type="ChEBI" id="CHEBI:29108"/>
        <label>4</label>
    </ligand>
</feature>
<feature type="binding site" evidence="1">
    <location>
        <position position="146"/>
    </location>
    <ligand>
        <name>Ca(2+)</name>
        <dbReference type="ChEBI" id="CHEBI:29108"/>
        <label>4</label>
    </ligand>
</feature>
<feature type="binding site" evidence="1">
    <location>
        <position position="151"/>
    </location>
    <ligand>
        <name>Ca(2+)</name>
        <dbReference type="ChEBI" id="CHEBI:29108"/>
        <label>4</label>
    </ligand>
</feature>
<name>TNNC2_ANGAN</name>
<protein>
    <recommendedName>
        <fullName>Troponin C, skeletal muscle</fullName>
        <shortName>TNC</shortName>
    </recommendedName>
</protein>